<feature type="chain" id="PRO_0000448700" description="Protein salt-induced and EIN3/EIL1-dependent 1">
    <location>
        <begin position="1"/>
        <end position="93"/>
    </location>
</feature>
<feature type="region of interest" description="Disordered" evidence="1">
    <location>
        <begin position="23"/>
        <end position="46"/>
    </location>
</feature>
<feature type="compositionally biased region" description="Low complexity" evidence="1">
    <location>
        <begin position="23"/>
        <end position="36"/>
    </location>
</feature>
<feature type="sequence conflict" description="In Ref. 5; AAM64981." evidence="4" ref="5">
    <original>S</original>
    <variation>L</variation>
    <location>
        <position position="31"/>
    </location>
</feature>
<protein>
    <recommendedName>
        <fullName evidence="3">Protein salt-induced and EIN3/EIL1-dependent 1</fullName>
    </recommendedName>
</protein>
<reference key="1">
    <citation type="journal article" date="1997" name="DNA Res.">
        <title>Structural analysis of Arabidopsis thaliana chromosome 5. III. Sequence features of the regions of 1,191,918 bp covered by seventeen physically assigned P1 clones.</title>
        <authorList>
            <person name="Nakamura Y."/>
            <person name="Sato S."/>
            <person name="Kaneko T."/>
            <person name="Kotani H."/>
            <person name="Asamizu E."/>
            <person name="Miyajima N."/>
            <person name="Tabata S."/>
        </authorList>
    </citation>
    <scope>NUCLEOTIDE SEQUENCE [LARGE SCALE GENOMIC DNA]</scope>
    <source>
        <strain>cv. Columbia</strain>
    </source>
</reference>
<reference key="2">
    <citation type="journal article" date="2017" name="Plant J.">
        <title>Araport11: a complete reannotation of the Arabidopsis thaliana reference genome.</title>
        <authorList>
            <person name="Cheng C.Y."/>
            <person name="Krishnakumar V."/>
            <person name="Chan A.P."/>
            <person name="Thibaud-Nissen F."/>
            <person name="Schobel S."/>
            <person name="Town C.D."/>
        </authorList>
    </citation>
    <scope>GENOME REANNOTATION</scope>
    <source>
        <strain>cv. Columbia</strain>
    </source>
</reference>
<reference key="3">
    <citation type="journal article" date="2003" name="Science">
        <title>Empirical analysis of transcriptional activity in the Arabidopsis genome.</title>
        <authorList>
            <person name="Yamada K."/>
            <person name="Lim J."/>
            <person name="Dale J.M."/>
            <person name="Chen H."/>
            <person name="Shinn P."/>
            <person name="Palm C.J."/>
            <person name="Southwick A.M."/>
            <person name="Wu H.C."/>
            <person name="Kim C.J."/>
            <person name="Nguyen M."/>
            <person name="Pham P.K."/>
            <person name="Cheuk R.F."/>
            <person name="Karlin-Newmann G."/>
            <person name="Liu S.X."/>
            <person name="Lam B."/>
            <person name="Sakano H."/>
            <person name="Wu T."/>
            <person name="Yu G."/>
            <person name="Miranda M."/>
            <person name="Quach H.L."/>
            <person name="Tripp M."/>
            <person name="Chang C.H."/>
            <person name="Lee J.M."/>
            <person name="Toriumi M.J."/>
            <person name="Chan M.M."/>
            <person name="Tang C.C."/>
            <person name="Onodera C.S."/>
            <person name="Deng J.M."/>
            <person name="Akiyama K."/>
            <person name="Ansari Y."/>
            <person name="Arakawa T."/>
            <person name="Banh J."/>
            <person name="Banno F."/>
            <person name="Bowser L."/>
            <person name="Brooks S.Y."/>
            <person name="Carninci P."/>
            <person name="Chao Q."/>
            <person name="Choy N."/>
            <person name="Enju A."/>
            <person name="Goldsmith A.D."/>
            <person name="Gurjal M."/>
            <person name="Hansen N.F."/>
            <person name="Hayashizaki Y."/>
            <person name="Johnson-Hopson C."/>
            <person name="Hsuan V.W."/>
            <person name="Iida K."/>
            <person name="Karnes M."/>
            <person name="Khan S."/>
            <person name="Koesema E."/>
            <person name="Ishida J."/>
            <person name="Jiang P.X."/>
            <person name="Jones T."/>
            <person name="Kawai J."/>
            <person name="Kamiya A."/>
            <person name="Meyers C."/>
            <person name="Nakajima M."/>
            <person name="Narusaka M."/>
            <person name="Seki M."/>
            <person name="Sakurai T."/>
            <person name="Satou M."/>
            <person name="Tamse R."/>
            <person name="Vaysberg M."/>
            <person name="Wallender E.K."/>
            <person name="Wong C."/>
            <person name="Yamamura Y."/>
            <person name="Yuan S."/>
            <person name="Shinozaki K."/>
            <person name="Davis R.W."/>
            <person name="Theologis A."/>
            <person name="Ecker J.R."/>
        </authorList>
    </citation>
    <scope>NUCLEOTIDE SEQUENCE [LARGE SCALE MRNA]</scope>
    <source>
        <strain>cv. Columbia</strain>
    </source>
</reference>
<reference key="4">
    <citation type="journal article" date="2009" name="DNA Res.">
        <title>Analysis of multiple occurrences of alternative splicing events in Arabidopsis thaliana using novel sequenced full-length cDNAs.</title>
        <authorList>
            <person name="Iida K."/>
            <person name="Fukami-Kobayashi K."/>
            <person name="Toyoda A."/>
            <person name="Sakaki Y."/>
            <person name="Kobayashi M."/>
            <person name="Seki M."/>
            <person name="Shinozaki K."/>
        </authorList>
    </citation>
    <scope>NUCLEOTIDE SEQUENCE [LARGE SCALE MRNA]</scope>
    <source>
        <strain>cv. Columbia</strain>
        <tissue>Rosette leaf</tissue>
    </source>
</reference>
<reference key="5">
    <citation type="submission" date="2002-03" db="EMBL/GenBank/DDBJ databases">
        <title>Full-length cDNA from Arabidopsis thaliana.</title>
        <authorList>
            <person name="Brover V.V."/>
            <person name="Troukhan M.E."/>
            <person name="Alexandrov N.A."/>
            <person name="Lu Y.-P."/>
            <person name="Flavell R.B."/>
            <person name="Feldmann K.A."/>
        </authorList>
    </citation>
    <scope>NUCLEOTIDE SEQUENCE [LARGE SCALE MRNA]</scope>
</reference>
<reference key="6">
    <citation type="journal article" date="2014" name="PLoS Genet.">
        <title>Salt-induced stabilization of EIN3/EIL1 confers salinity tolerance by deterring ROS accumulation in Arabidopsis.</title>
        <authorList>
            <person name="Peng J."/>
            <person name="Li Z."/>
            <person name="Wen X."/>
            <person name="Li W."/>
            <person name="Shi H."/>
            <person name="Yang L."/>
            <person name="Zhu H."/>
            <person name="Guo H."/>
        </authorList>
    </citation>
    <scope>FUNCTION</scope>
    <scope>DISRUPTION PHENOTYPE</scope>
    <scope>ACTIVITY REGULATION</scope>
    <source>
        <strain>cv. Columbia</strain>
    </source>
</reference>
<comment type="function">
    <text evidence="2">Involved in ethylene-dependent salt stress responses by reducing reactive oxygen species (ROS) accumulation.</text>
</comment>
<comment type="activity regulation">
    <text evidence="2">Triggered by EIN3.</text>
</comment>
<comment type="interaction">
    <interactant intactId="EBI-25529548">
        <id>Q9FMS4</id>
    </interactant>
    <interactant intactId="EBI-1392093">
        <id>Q5ICL9</id>
        <label>NPR4</label>
    </interactant>
    <organismsDiffer>false</organismsDiffer>
    <experiments>3</experiments>
</comment>
<comment type="disruption phenotype">
    <text evidence="2">Increased sensitivity to salt.</text>
</comment>
<evidence type="ECO:0000256" key="1">
    <source>
        <dbReference type="SAM" id="MobiDB-lite"/>
    </source>
</evidence>
<evidence type="ECO:0000269" key="2">
    <source>
    </source>
</evidence>
<evidence type="ECO:0000303" key="3">
    <source>
    </source>
</evidence>
<evidence type="ECO:0000305" key="4"/>
<evidence type="ECO:0000312" key="5">
    <source>
        <dbReference type="Araport" id="AT5G22270"/>
    </source>
</evidence>
<evidence type="ECO:0000312" key="6">
    <source>
        <dbReference type="EMBL" id="AED93003.1"/>
    </source>
</evidence>
<proteinExistence type="evidence at protein level"/>
<organism>
    <name type="scientific">Arabidopsis thaliana</name>
    <name type="common">Mouse-ear cress</name>
    <dbReference type="NCBI Taxonomy" id="3702"/>
    <lineage>
        <taxon>Eukaryota</taxon>
        <taxon>Viridiplantae</taxon>
        <taxon>Streptophyta</taxon>
        <taxon>Embryophyta</taxon>
        <taxon>Tracheophyta</taxon>
        <taxon>Spermatophyta</taxon>
        <taxon>Magnoliopsida</taxon>
        <taxon>eudicotyledons</taxon>
        <taxon>Gunneridae</taxon>
        <taxon>Pentapetalae</taxon>
        <taxon>rosids</taxon>
        <taxon>malvids</taxon>
        <taxon>Brassicales</taxon>
        <taxon>Brassicaceae</taxon>
        <taxon>Camelineae</taxon>
        <taxon>Arabidopsis</taxon>
    </lineage>
</organism>
<accession>Q9FMS4</accession>
<accession>Q8LB42</accession>
<dbReference type="EMBL" id="AB007651">
    <property type="protein sequence ID" value="BAB08325.1"/>
    <property type="molecule type" value="Genomic_DNA"/>
</dbReference>
<dbReference type="EMBL" id="CP002688">
    <property type="protein sequence ID" value="AED93003.1"/>
    <property type="molecule type" value="Genomic_DNA"/>
</dbReference>
<dbReference type="EMBL" id="AY052339">
    <property type="protein sequence ID" value="AAK96531.1"/>
    <property type="molecule type" value="mRNA"/>
</dbReference>
<dbReference type="EMBL" id="AY098961">
    <property type="protein sequence ID" value="AAM19971.1"/>
    <property type="molecule type" value="mRNA"/>
</dbReference>
<dbReference type="EMBL" id="AK319023">
    <property type="protein sequence ID" value="BAH57138.1"/>
    <property type="molecule type" value="mRNA"/>
</dbReference>
<dbReference type="EMBL" id="AY087434">
    <property type="protein sequence ID" value="AAM64981.1"/>
    <property type="molecule type" value="mRNA"/>
</dbReference>
<dbReference type="RefSeq" id="NP_197619.1">
    <property type="nucleotide sequence ID" value="NM_122132.3"/>
</dbReference>
<dbReference type="FunCoup" id="Q9FMS4">
    <property type="interactions" value="6"/>
</dbReference>
<dbReference type="IntAct" id="Q9FMS4">
    <property type="interactions" value="1"/>
</dbReference>
<dbReference type="STRING" id="3702.Q9FMS4"/>
<dbReference type="PaxDb" id="3702-AT5G22270.1"/>
<dbReference type="ProteomicsDB" id="181147"/>
<dbReference type="EnsemblPlants" id="AT5G22270.1">
    <property type="protein sequence ID" value="AT5G22270.1"/>
    <property type="gene ID" value="AT5G22270"/>
</dbReference>
<dbReference type="GeneID" id="832287"/>
<dbReference type="Gramene" id="AT5G22270.1">
    <property type="protein sequence ID" value="AT5G22270.1"/>
    <property type="gene ID" value="AT5G22270"/>
</dbReference>
<dbReference type="KEGG" id="ath:AT5G22270"/>
<dbReference type="Araport" id="AT5G22270"/>
<dbReference type="TAIR" id="AT5G22270">
    <property type="gene designation" value="SIED1"/>
</dbReference>
<dbReference type="HOGENOM" id="CLU_2489865_0_0_1"/>
<dbReference type="InParanoid" id="Q9FMS4"/>
<dbReference type="OMA" id="MNQQETA"/>
<dbReference type="PhylomeDB" id="Q9FMS4"/>
<dbReference type="PRO" id="PR:Q9FMS4"/>
<dbReference type="Proteomes" id="UP000006548">
    <property type="component" value="Chromosome 5"/>
</dbReference>
<dbReference type="ExpressionAtlas" id="Q9FMS4">
    <property type="expression patterns" value="baseline and differential"/>
</dbReference>
<dbReference type="GO" id="GO:0009873">
    <property type="term" value="P:ethylene-activated signaling pathway"/>
    <property type="evidence" value="ECO:0000315"/>
    <property type="project" value="UniProtKB"/>
</dbReference>
<dbReference type="GO" id="GO:2000377">
    <property type="term" value="P:regulation of reactive oxygen species metabolic process"/>
    <property type="evidence" value="ECO:0000315"/>
    <property type="project" value="UniProtKB"/>
</dbReference>
<dbReference type="GO" id="GO:0009651">
    <property type="term" value="P:response to salt stress"/>
    <property type="evidence" value="ECO:0000315"/>
    <property type="project" value="UniProtKB"/>
</dbReference>
<dbReference type="InterPro" id="IPR055281">
    <property type="entry name" value="GIR1-2/SIED1"/>
</dbReference>
<dbReference type="InterPro" id="IPR056440">
    <property type="entry name" value="Zn-ribbon_GIR1"/>
</dbReference>
<dbReference type="PANTHER" id="PTHR33177:SF30">
    <property type="entry name" value="PROTEIN SALT-INDUCED AND EIN3_EIL1-DEPENDENT 1"/>
    <property type="match status" value="1"/>
</dbReference>
<dbReference type="PANTHER" id="PTHR33177">
    <property type="entry name" value="PUTATIVE-RELATED"/>
    <property type="match status" value="1"/>
</dbReference>
<dbReference type="Pfam" id="PF24747">
    <property type="entry name" value="Zn-ribbon_GIR1"/>
    <property type="match status" value="1"/>
</dbReference>
<gene>
    <name evidence="3" type="primary">SIED1</name>
    <name evidence="5" type="ordered locus">At5g22270</name>
    <name evidence="6" type="ORF">T6G21.5</name>
</gene>
<name>SIED1_ARATH</name>
<keyword id="KW-0936">Ethylene signaling pathway</keyword>
<keyword id="KW-1185">Reference proteome</keyword>
<keyword id="KW-0346">Stress response</keyword>
<sequence>MNQEAASNLGLDLKLNISPSLDSSLLTESSSSSLCSEEAEGGGGEAKSMVVVGCPNCIMYIITSLENDPRCPRCNSHVLLDFLTGNHSKKSTS</sequence>